<reference key="1">
    <citation type="journal article" date="2002" name="Nucleic Acids Res.">
        <title>Genome sequence of Shigella flexneri 2a: insights into pathogenicity through comparison with genomes of Escherichia coli K12 and O157.</title>
        <authorList>
            <person name="Jin Q."/>
            <person name="Yuan Z."/>
            <person name="Xu J."/>
            <person name="Wang Y."/>
            <person name="Shen Y."/>
            <person name="Lu W."/>
            <person name="Wang J."/>
            <person name="Liu H."/>
            <person name="Yang J."/>
            <person name="Yang F."/>
            <person name="Zhang X."/>
            <person name="Zhang J."/>
            <person name="Yang G."/>
            <person name="Wu H."/>
            <person name="Qu D."/>
            <person name="Dong J."/>
            <person name="Sun L."/>
            <person name="Xue Y."/>
            <person name="Zhao A."/>
            <person name="Gao Y."/>
            <person name="Zhu J."/>
            <person name="Kan B."/>
            <person name="Ding K."/>
            <person name="Chen S."/>
            <person name="Cheng H."/>
            <person name="Yao Z."/>
            <person name="He B."/>
            <person name="Chen R."/>
            <person name="Ma D."/>
            <person name="Qiang B."/>
            <person name="Wen Y."/>
            <person name="Hou Y."/>
            <person name="Yu J."/>
        </authorList>
    </citation>
    <scope>NUCLEOTIDE SEQUENCE [LARGE SCALE GENOMIC DNA]</scope>
    <source>
        <strain>301 / Serotype 2a</strain>
    </source>
</reference>
<reference key="2">
    <citation type="journal article" date="2003" name="Infect. Immun.">
        <title>Complete genome sequence and comparative genomics of Shigella flexneri serotype 2a strain 2457T.</title>
        <authorList>
            <person name="Wei J."/>
            <person name="Goldberg M.B."/>
            <person name="Burland V."/>
            <person name="Venkatesan M.M."/>
            <person name="Deng W."/>
            <person name="Fournier G."/>
            <person name="Mayhew G.F."/>
            <person name="Plunkett G. III"/>
            <person name="Rose D.J."/>
            <person name="Darling A."/>
            <person name="Mau B."/>
            <person name="Perna N.T."/>
            <person name="Payne S.M."/>
            <person name="Runyen-Janecky L.J."/>
            <person name="Zhou S."/>
            <person name="Schwartz D.C."/>
            <person name="Blattner F.R."/>
        </authorList>
    </citation>
    <scope>NUCLEOTIDE SEQUENCE [LARGE SCALE GENOMIC DNA]</scope>
    <source>
        <strain>ATCC 700930 / 2457T / Serotype 2a</strain>
    </source>
</reference>
<accession>Q83LK9</accession>
<accession>Q7UD00</accession>
<feature type="chain" id="PRO_0000403044" description="FMN reductase (NADH) RutF">
    <location>
        <begin position="1"/>
        <end position="152"/>
    </location>
</feature>
<comment type="function">
    <text evidence="1">Catalyzes the reduction of FMN to FMNH2 which is used to reduce pyrimidine by RutA via the Rut pathway.</text>
</comment>
<comment type="catalytic activity">
    <reaction evidence="1">
        <text>FMNH2 + NAD(+) = FMN + NADH + 2 H(+)</text>
        <dbReference type="Rhea" id="RHEA:21620"/>
        <dbReference type="ChEBI" id="CHEBI:15378"/>
        <dbReference type="ChEBI" id="CHEBI:57540"/>
        <dbReference type="ChEBI" id="CHEBI:57618"/>
        <dbReference type="ChEBI" id="CHEBI:57945"/>
        <dbReference type="ChEBI" id="CHEBI:58210"/>
        <dbReference type="EC" id="1.5.1.42"/>
    </reaction>
</comment>
<comment type="induction">
    <text evidence="1">Up-regulated by the nitrogen regulatory protein C (NtrC also called GlnG) and repressed by RutR.</text>
</comment>
<comment type="similarity">
    <text evidence="1">Belongs to the non-flavoprotein flavin reductase family. RutF subfamily.</text>
</comment>
<protein>
    <recommendedName>
        <fullName evidence="1">FMN reductase (NADH) RutF</fullName>
        <ecNumber evidence="1">1.5.1.42</ecNumber>
    </recommendedName>
    <alternativeName>
        <fullName evidence="1">FMN reductase</fullName>
    </alternativeName>
    <alternativeName>
        <fullName evidence="1">NADH-flavin reductase RutF</fullName>
    </alternativeName>
    <alternativeName>
        <fullName evidence="1">NADH:flavin oxidoreductase</fullName>
    </alternativeName>
</protein>
<keyword id="KW-0285">Flavoprotein</keyword>
<keyword id="KW-0288">FMN</keyword>
<keyword id="KW-0520">NAD</keyword>
<keyword id="KW-0560">Oxidoreductase</keyword>
<keyword id="KW-1185">Reference proteome</keyword>
<dbReference type="EC" id="1.5.1.42" evidence="1"/>
<dbReference type="EMBL" id="AE005674">
    <property type="protein sequence ID" value="AAN42636.2"/>
    <property type="molecule type" value="Genomic_DNA"/>
</dbReference>
<dbReference type="EMBL" id="AE014073">
    <property type="protein sequence ID" value="AAP16521.1"/>
    <property type="molecule type" value="Genomic_DNA"/>
</dbReference>
<dbReference type="RefSeq" id="NP_706929.2">
    <property type="nucleotide sequence ID" value="NC_004337.2"/>
</dbReference>
<dbReference type="SMR" id="Q83LK9"/>
<dbReference type="STRING" id="198214.SF1010"/>
<dbReference type="PaxDb" id="198214-SF1010"/>
<dbReference type="GeneID" id="1023968"/>
<dbReference type="KEGG" id="sfl:SF1010"/>
<dbReference type="KEGG" id="sfx:S1080"/>
<dbReference type="PATRIC" id="fig|198214.7.peg.1174"/>
<dbReference type="HOGENOM" id="CLU_059021_2_2_6"/>
<dbReference type="Proteomes" id="UP000001006">
    <property type="component" value="Chromosome"/>
</dbReference>
<dbReference type="Proteomes" id="UP000002673">
    <property type="component" value="Chromosome"/>
</dbReference>
<dbReference type="GO" id="GO:0010181">
    <property type="term" value="F:FMN binding"/>
    <property type="evidence" value="ECO:0007669"/>
    <property type="project" value="InterPro"/>
</dbReference>
<dbReference type="GO" id="GO:0052874">
    <property type="term" value="F:FMN reductase (NADH) activity"/>
    <property type="evidence" value="ECO:0007669"/>
    <property type="project" value="UniProtKB-EC"/>
</dbReference>
<dbReference type="GO" id="GO:0008752">
    <property type="term" value="F:FMN reductase [NAD(P)H] activity"/>
    <property type="evidence" value="ECO:0007669"/>
    <property type="project" value="InterPro"/>
</dbReference>
<dbReference type="GO" id="GO:0042602">
    <property type="term" value="F:riboflavin reductase (NADPH) activity"/>
    <property type="evidence" value="ECO:0007669"/>
    <property type="project" value="UniProtKB-UniRule"/>
</dbReference>
<dbReference type="GO" id="GO:0019740">
    <property type="term" value="P:nitrogen utilization"/>
    <property type="evidence" value="ECO:0007669"/>
    <property type="project" value="UniProtKB-UniRule"/>
</dbReference>
<dbReference type="GO" id="GO:0006212">
    <property type="term" value="P:uracil catabolic process"/>
    <property type="evidence" value="ECO:0007669"/>
    <property type="project" value="UniProtKB-UniRule"/>
</dbReference>
<dbReference type="FunFam" id="2.30.110.10:FF:000002">
    <property type="entry name" value="FMN reductase (NADH) RutF"/>
    <property type="match status" value="1"/>
</dbReference>
<dbReference type="Gene3D" id="2.30.110.10">
    <property type="entry name" value="Electron Transport, Fmn-binding Protein, Chain A"/>
    <property type="match status" value="1"/>
</dbReference>
<dbReference type="HAMAP" id="MF_00833">
    <property type="entry name" value="RutF"/>
    <property type="match status" value="1"/>
</dbReference>
<dbReference type="InterPro" id="IPR002563">
    <property type="entry name" value="Flavin_Rdtase-like_dom"/>
</dbReference>
<dbReference type="InterPro" id="IPR050268">
    <property type="entry name" value="NADH-dep_flavin_reductase"/>
</dbReference>
<dbReference type="InterPro" id="IPR019917">
    <property type="entry name" value="RutF"/>
</dbReference>
<dbReference type="InterPro" id="IPR012349">
    <property type="entry name" value="Split_barrel_FMN-bd"/>
</dbReference>
<dbReference type="NCBIfam" id="TIGR03615">
    <property type="entry name" value="RutF"/>
    <property type="match status" value="1"/>
</dbReference>
<dbReference type="PANTHER" id="PTHR30466">
    <property type="entry name" value="FLAVIN REDUCTASE"/>
    <property type="match status" value="1"/>
</dbReference>
<dbReference type="PANTHER" id="PTHR30466:SF1">
    <property type="entry name" value="FMN REDUCTASE (NADH) RUTF"/>
    <property type="match status" value="1"/>
</dbReference>
<dbReference type="Pfam" id="PF01613">
    <property type="entry name" value="Flavin_Reduct"/>
    <property type="match status" value="1"/>
</dbReference>
<dbReference type="SMART" id="SM00903">
    <property type="entry name" value="Flavin_Reduct"/>
    <property type="match status" value="1"/>
</dbReference>
<dbReference type="SUPFAM" id="SSF50475">
    <property type="entry name" value="FMN-binding split barrel"/>
    <property type="match status" value="1"/>
</dbReference>
<organism>
    <name type="scientific">Shigella flexneri</name>
    <dbReference type="NCBI Taxonomy" id="623"/>
    <lineage>
        <taxon>Bacteria</taxon>
        <taxon>Pseudomonadati</taxon>
        <taxon>Pseudomonadota</taxon>
        <taxon>Gammaproteobacteria</taxon>
        <taxon>Enterobacterales</taxon>
        <taxon>Enterobacteriaceae</taxon>
        <taxon>Shigella</taxon>
    </lineage>
</organism>
<gene>
    <name evidence="1" type="primary">rutF</name>
    <name type="ordered locus">SF1010</name>
    <name type="ordered locus">S1080</name>
</gene>
<proteinExistence type="inferred from homology"/>
<evidence type="ECO:0000255" key="1">
    <source>
        <dbReference type="HAMAP-Rule" id="MF_00833"/>
    </source>
</evidence>
<name>RUTF_SHIFL</name>
<sequence length="152" mass="16358">MSCMGAAVNIITTDGPAGRAGFTASAVCSVTDTPPTLLVCLNRGASVWPVFNENRTLCVNTLSAGQEPLSNLFGGKTPMEHRFAAARWQTGVTGCPQLEEALVSFDCRISQVVSVGTHDILFCAIEAIHRHTTPYGLVWFDRSYHALMRPAC</sequence>